<evidence type="ECO:0000250" key="1">
    <source>
        <dbReference type="UniProtKB" id="A1ZA55"/>
    </source>
</evidence>
<evidence type="ECO:0000250" key="2">
    <source>
        <dbReference type="UniProtKB" id="Q8C6L5"/>
    </source>
</evidence>
<evidence type="ECO:0000250" key="3">
    <source>
        <dbReference type="UniProtKB" id="Q8N884"/>
    </source>
</evidence>
<evidence type="ECO:0000269" key="4">
    <source>
    </source>
</evidence>
<evidence type="ECO:0000303" key="5">
    <source>
    </source>
</evidence>
<evidence type="ECO:0000305" key="6"/>
<proteinExistence type="inferred from homology"/>
<dbReference type="EC" id="2.7.7.-" evidence="4"/>
<dbReference type="RefSeq" id="XP_017066709.1">
    <property type="nucleotide sequence ID" value="XM_017211220.1"/>
</dbReference>
<dbReference type="SMR" id="P0DV11"/>
<dbReference type="EnsemblMetazoa" id="XM_017211220.1">
    <property type="protein sequence ID" value="XP_017066709.1"/>
    <property type="gene ID" value="LOC108104889"/>
</dbReference>
<dbReference type="GeneID" id="108104889"/>
<dbReference type="OrthoDB" id="6054650at2759"/>
<dbReference type="GO" id="GO:0140700">
    <property type="term" value="F:3',2'-cyclic GMP-AMP synthase activity"/>
    <property type="evidence" value="ECO:0000250"/>
    <property type="project" value="UniProtKB"/>
</dbReference>
<dbReference type="GO" id="GO:0005524">
    <property type="term" value="F:ATP binding"/>
    <property type="evidence" value="ECO:0007669"/>
    <property type="project" value="UniProtKB-KW"/>
</dbReference>
<dbReference type="GO" id="GO:0003725">
    <property type="term" value="F:double-stranded RNA binding"/>
    <property type="evidence" value="ECO:0000314"/>
    <property type="project" value="UniProtKB"/>
</dbReference>
<dbReference type="GO" id="GO:0005525">
    <property type="term" value="F:GTP binding"/>
    <property type="evidence" value="ECO:0007669"/>
    <property type="project" value="UniProtKB-KW"/>
</dbReference>
<dbReference type="GO" id="GO:0046872">
    <property type="term" value="F:metal ion binding"/>
    <property type="evidence" value="ECO:0007669"/>
    <property type="project" value="UniProtKB-KW"/>
</dbReference>
<dbReference type="GO" id="GO:0051607">
    <property type="term" value="P:defense response to virus"/>
    <property type="evidence" value="ECO:0000250"/>
    <property type="project" value="UniProtKB"/>
</dbReference>
<dbReference type="GO" id="GO:1902615">
    <property type="term" value="P:immune response involved in response to exogenous dsRNA"/>
    <property type="evidence" value="ECO:0000314"/>
    <property type="project" value="UniProtKB"/>
</dbReference>
<dbReference type="GO" id="GO:0045087">
    <property type="term" value="P:innate immune response"/>
    <property type="evidence" value="ECO:0007669"/>
    <property type="project" value="UniProtKB-KW"/>
</dbReference>
<dbReference type="Gene3D" id="1.10.1410.40">
    <property type="match status" value="1"/>
</dbReference>
<dbReference type="Gene3D" id="3.30.460.90">
    <property type="match status" value="1"/>
</dbReference>
<dbReference type="InterPro" id="IPR046903">
    <property type="entry name" value="Mab-21-like_nuc_Trfase"/>
</dbReference>
<dbReference type="InterPro" id="IPR046906">
    <property type="entry name" value="Mab-21_HhH/H2TH-like"/>
</dbReference>
<dbReference type="InterPro" id="IPR024810">
    <property type="entry name" value="MAB21L/cGLR"/>
</dbReference>
<dbReference type="PANTHER" id="PTHR10656">
    <property type="entry name" value="CELL FATE DETERMINING PROTEIN MAB21-RELATED"/>
    <property type="match status" value="1"/>
</dbReference>
<dbReference type="PANTHER" id="PTHR10656:SF42">
    <property type="entry name" value="CYCLIC GMP-AMP SYNTHASE-LIKE PROTEIN-RELATED"/>
    <property type="match status" value="1"/>
</dbReference>
<dbReference type="Pfam" id="PF03281">
    <property type="entry name" value="Mab-21"/>
    <property type="match status" value="1"/>
</dbReference>
<dbReference type="Pfam" id="PF20266">
    <property type="entry name" value="Mab-21_C"/>
    <property type="match status" value="1"/>
</dbReference>
<dbReference type="SMART" id="SM01265">
    <property type="entry name" value="Mab-21"/>
    <property type="match status" value="1"/>
</dbReference>
<accession>P0DV11</accession>
<reference key="1">
    <citation type="journal article" date="2021" name="Elife">
        <title>Highly contiguous assemblies of 101 drosophilid genomes.</title>
        <authorList>
            <person name="Kim B.Y."/>
            <person name="Wang J.R."/>
            <person name="Miller D.E."/>
            <person name="Barmina O."/>
            <person name="Delaney E."/>
            <person name="Thompson A."/>
            <person name="Comeault A.A."/>
            <person name="Peede D."/>
            <person name="D'Agostino E.R."/>
            <person name="Pelaez J."/>
            <person name="Aguilar J.M."/>
            <person name="Haji D."/>
            <person name="Matsunaga T."/>
            <person name="Armstrong E.E."/>
            <person name="Zych M."/>
            <person name="Ogawa Y."/>
            <person name="Stamenkovic-Radak M."/>
            <person name="Jelic M."/>
            <person name="Veselinovic M.S."/>
            <person name="Tanaskovic M."/>
            <person name="Eric P."/>
            <person name="Gao J.J."/>
            <person name="Katoh T.K."/>
            <person name="Toda M.J."/>
            <person name="Watabe H."/>
            <person name="Watada M."/>
            <person name="Davis J.S."/>
            <person name="Moyle L.C."/>
            <person name="Manoli G."/>
            <person name="Bertolini E."/>
            <person name="Kostal V."/>
            <person name="Hawley R.S."/>
            <person name="Takahashi A."/>
            <person name="Jones C.D."/>
            <person name="Price D.K."/>
            <person name="Whiteman N."/>
            <person name="Kopp A."/>
            <person name="Matute D.R."/>
            <person name="Petrov D.A."/>
        </authorList>
    </citation>
    <scope>NUCLEOTIDE SEQUENCE [LARGE SCALE GENOMIC DNA]</scope>
</reference>
<reference key="2">
    <citation type="journal article" date="2021" name="Nature">
        <title>cGAS-like receptors sense RNA and control 3'2'-cGAMP signaling in Drosophila.</title>
        <authorList>
            <person name="Slavik K.M."/>
            <person name="Morehouse B.R."/>
            <person name="Ragucci A.E."/>
            <person name="Zhou W."/>
            <person name="Ai X."/>
            <person name="Chen Y."/>
            <person name="Li L."/>
            <person name="Wei Z."/>
            <person name="Baehre H."/>
            <person name="Koenig M."/>
            <person name="Seifert R."/>
            <person name="Lee A.S.Y."/>
            <person name="Cai H."/>
            <person name="Imler J.L."/>
            <person name="Kranzusch P.J."/>
        </authorList>
    </citation>
    <scope>FUNCTION</scope>
    <scope>ACTIVITY REGULATION</scope>
</reference>
<comment type="function">
    <text evidence="1 4">Nucleotidyltransferase that catalyzes the formation of cyclic GMP-AMP (3',2'-cGAMP) from ATP and GTP and plays a key role in innate immunity (PubMed:34261127). Synthesizes 3',2'-cGAMP in a two-step reaction through production of the linear intermediate pppA(2'-5')pG (By similarity). Acts as a key sensor of double-stranded RNA (dsRNA), the presence of dsRNA in the cytoplasm being a danger signal that triggers the immune responses (PubMed:34261127). Directly binds dsRNA longer than 15 bp, activating the nucleotidyltransferase activity, leading to synthesis of 3',2'-cGAMP, a second messenger that binds to and activates Sting, thereby triggering the antiviral immune response via activation of the NF-kappa-B transcription factor Rel (Relish) (PubMed:34261127).</text>
</comment>
<comment type="catalytic activity">
    <reaction evidence="1">
        <text>GTP + ATP = 3',2'-cGAMP + 2 diphosphate</text>
        <dbReference type="Rhea" id="RHEA:68344"/>
        <dbReference type="ChEBI" id="CHEBI:30616"/>
        <dbReference type="ChEBI" id="CHEBI:33019"/>
        <dbReference type="ChEBI" id="CHEBI:37565"/>
        <dbReference type="ChEBI" id="CHEBI:177334"/>
    </reaction>
    <physiologicalReaction direction="left-to-right" evidence="1">
        <dbReference type="Rhea" id="RHEA:68345"/>
    </physiologicalReaction>
</comment>
<comment type="catalytic activity">
    <reaction evidence="1">
        <text>GTP + ATP = pppA(2'-5')pG + diphosphate</text>
        <dbReference type="Rhea" id="RHEA:68348"/>
        <dbReference type="ChEBI" id="CHEBI:30616"/>
        <dbReference type="ChEBI" id="CHEBI:33019"/>
        <dbReference type="ChEBI" id="CHEBI:37565"/>
        <dbReference type="ChEBI" id="CHEBI:177335"/>
    </reaction>
    <physiologicalReaction direction="left-to-right" evidence="1">
        <dbReference type="Rhea" id="RHEA:68349"/>
    </physiologicalReaction>
</comment>
<comment type="catalytic activity">
    <reaction evidence="1">
        <text>pppA(2'-5')pG = 3',2'-cGAMP + diphosphate</text>
        <dbReference type="Rhea" id="RHEA:68352"/>
        <dbReference type="ChEBI" id="CHEBI:33019"/>
        <dbReference type="ChEBI" id="CHEBI:177334"/>
        <dbReference type="ChEBI" id="CHEBI:177335"/>
    </reaction>
    <physiologicalReaction direction="left-to-right" evidence="1">
        <dbReference type="Rhea" id="RHEA:68353"/>
    </physiologicalReaction>
</comment>
<comment type="cofactor">
    <cofactor evidence="1">
        <name>Mg(2+)</name>
        <dbReference type="ChEBI" id="CHEBI:18420"/>
    </cofactor>
    <cofactor evidence="1">
        <name>Mn(2+)</name>
        <dbReference type="ChEBI" id="CHEBI:29035"/>
    </cofactor>
</comment>
<comment type="activity regulation">
    <text evidence="4">The enzyme activity is specifically activated by double-stranded RNA (dsRNA).</text>
</comment>
<comment type="similarity">
    <text evidence="6">Belongs to the mab-21 family.</text>
</comment>
<feature type="chain" id="PRO_0000454446" description="Cyclic GMP-AMP synthase-like receptor">
    <location>
        <begin position="1"/>
        <end position="372"/>
    </location>
</feature>
<feature type="binding site" evidence="2">
    <location>
        <position position="68"/>
    </location>
    <ligand>
        <name>GTP</name>
        <dbReference type="ChEBI" id="CHEBI:37565"/>
    </ligand>
</feature>
<feature type="binding site" evidence="3">
    <location>
        <position position="70"/>
    </location>
    <ligand>
        <name>ATP</name>
        <dbReference type="ChEBI" id="CHEBI:30616"/>
    </ligand>
</feature>
<feature type="binding site" evidence="3">
    <location>
        <begin position="82"/>
        <end position="84"/>
    </location>
    <ligand>
        <name>ATP</name>
        <dbReference type="ChEBI" id="CHEBI:30616"/>
    </ligand>
</feature>
<feature type="binding site" evidence="3">
    <location>
        <position position="82"/>
    </location>
    <ligand>
        <name>Mg(2+)</name>
        <dbReference type="ChEBI" id="CHEBI:18420"/>
        <note>catalytic</note>
    </ligand>
</feature>
<feature type="binding site" evidence="3">
    <location>
        <position position="84"/>
    </location>
    <ligand>
        <name>Mg(2+)</name>
        <dbReference type="ChEBI" id="CHEBI:18420"/>
        <note>catalytic</note>
    </ligand>
</feature>
<feature type="binding site" evidence="3">
    <location>
        <position position="190"/>
    </location>
    <ligand>
        <name>GTP</name>
        <dbReference type="ChEBI" id="CHEBI:37565"/>
    </ligand>
</feature>
<feature type="binding site" evidence="3">
    <location>
        <position position="190"/>
    </location>
    <ligand>
        <name>Mg(2+)</name>
        <dbReference type="ChEBI" id="CHEBI:18420"/>
        <note>catalytic</note>
    </ligand>
</feature>
<feature type="binding site" evidence="3">
    <location>
        <begin position="236"/>
        <end position="243"/>
    </location>
    <ligand>
        <name>GTP</name>
        <dbReference type="ChEBI" id="CHEBI:37565"/>
    </ligand>
</feature>
<feature type="binding site" evidence="3">
    <location>
        <begin position="240"/>
        <end position="243"/>
    </location>
    <ligand>
        <name>ATP</name>
        <dbReference type="ChEBI" id="CHEBI:30616"/>
    </ligand>
</feature>
<feature type="binding site" evidence="3">
    <location>
        <position position="261"/>
    </location>
    <ligand>
        <name>ATP</name>
        <dbReference type="ChEBI" id="CHEBI:30616"/>
    </ligand>
</feature>
<feature type="binding site" evidence="3">
    <location>
        <begin position="274"/>
        <end position="278"/>
    </location>
    <ligand>
        <name>ATP</name>
        <dbReference type="ChEBI" id="CHEBI:30616"/>
    </ligand>
</feature>
<sequence>MENFAEKKISKPLTFGEGIQYVLDRISIKPEDRQTFKEDAQQIQNEFVRAISKQDPYFASAFRGLALTGSSLDNVRINLPDEFDMLTKIKMPCKLEPVPIRSHPGYVFLRASGDNIPIHLVDRWEDEYCIDRLKVQAWFRDNITAVIPELSNIRCNDGRSYELVNKTIGDVAHTIQAKCLSDPDRSISFDFVPAFEFSASEWPRIFPQHRNEDRSWYAVPSEFKYPNVGDDPLSFLVCAPYWERMVLTKKQHLKDGYRLMKAMRDANDMPKIYSYTIKSVFLNASNVNKLINWNQSPGRILIRAIDLLAMFLRKGKLPSYLVPDRNMLDRLSVDMRQDYRRKLCHIFRRLIRCRDRDCMTSEDLQFIFGMRY</sequence>
<protein>
    <recommendedName>
        <fullName evidence="6">Cyclic GMP-AMP synthase-like receptor</fullName>
        <shortName evidence="5">cGLR</shortName>
        <ecNumber evidence="4">2.7.7.-</ecNumber>
    </recommendedName>
</protein>
<keyword id="KW-0051">Antiviral defense</keyword>
<keyword id="KW-0067">ATP-binding</keyword>
<keyword id="KW-0342">GTP-binding</keyword>
<keyword id="KW-0391">Immunity</keyword>
<keyword id="KW-0399">Innate immunity</keyword>
<keyword id="KW-0460">Magnesium</keyword>
<keyword id="KW-0464">Manganese</keyword>
<keyword id="KW-0479">Metal-binding</keyword>
<keyword id="KW-0547">Nucleotide-binding</keyword>
<keyword id="KW-0548">Nucleotidyltransferase</keyword>
<keyword id="KW-0694">RNA-binding</keyword>
<keyword id="KW-0808">Transferase</keyword>
<name>CGLR_DROEU</name>
<organism>
    <name type="scientific">Drosophila eugracilis</name>
    <name type="common">Fruit fly</name>
    <dbReference type="NCBI Taxonomy" id="29029"/>
    <lineage>
        <taxon>Eukaryota</taxon>
        <taxon>Metazoa</taxon>
        <taxon>Ecdysozoa</taxon>
        <taxon>Arthropoda</taxon>
        <taxon>Hexapoda</taxon>
        <taxon>Insecta</taxon>
        <taxon>Pterygota</taxon>
        <taxon>Neoptera</taxon>
        <taxon>Endopterygota</taxon>
        <taxon>Diptera</taxon>
        <taxon>Brachycera</taxon>
        <taxon>Muscomorpha</taxon>
        <taxon>Ephydroidea</taxon>
        <taxon>Drosophilidae</taxon>
        <taxon>Drosophila</taxon>
        <taxon>Sophophora</taxon>
    </lineage>
</organism>